<protein>
    <recommendedName>
        <fullName evidence="1">Large ribosomal subunit protein uL5</fullName>
    </recommendedName>
    <alternativeName>
        <fullName evidence="2">50S ribosomal protein L5</fullName>
    </alternativeName>
</protein>
<keyword id="KW-1185">Reference proteome</keyword>
<keyword id="KW-0687">Ribonucleoprotein</keyword>
<keyword id="KW-0689">Ribosomal protein</keyword>
<keyword id="KW-0694">RNA-binding</keyword>
<keyword id="KW-0699">rRNA-binding</keyword>
<keyword id="KW-0820">tRNA-binding</keyword>
<comment type="function">
    <text evidence="1">This is one of the proteins that bind and probably mediate the attachment of the 5S RNA into the large ribosomal subunit, where it forms part of the central protuberance. In the 70S ribosome it contacts protein S13 of the 30S subunit (bridge B1b), connecting the 2 subunits; this bridge is implicated in subunit movement. Contacts the P site tRNA; the 5S rRNA and some of its associated proteins might help stabilize positioning of ribosome-bound tRNAs.</text>
</comment>
<comment type="subunit">
    <text evidence="1">Part of the 50S ribosomal subunit; part of the 5S rRNA/L5/L18/L25 subcomplex. Contacts the 5S rRNA and the P site tRNA. Forms a bridge to the 30S subunit in the 70S ribosome.</text>
</comment>
<comment type="similarity">
    <text evidence="1">Belongs to the universal ribosomal protein uL5 family.</text>
</comment>
<feature type="chain" id="PRO_1000214624" description="Large ribosomal subunit protein uL5">
    <location>
        <begin position="1"/>
        <end position="179"/>
    </location>
</feature>
<name>RL5_DESAH</name>
<gene>
    <name evidence="1" type="primary">rplE</name>
    <name type="ordered locus">HRM2_36140</name>
</gene>
<proteinExistence type="inferred from homology"/>
<reference key="1">
    <citation type="journal article" date="2009" name="Environ. Microbiol.">
        <title>Genome sequence of Desulfobacterium autotrophicum HRM2, a marine sulfate reducer oxidizing organic carbon completely to carbon dioxide.</title>
        <authorList>
            <person name="Strittmatter A.W."/>
            <person name="Liesegang H."/>
            <person name="Rabus R."/>
            <person name="Decker I."/>
            <person name="Amann J."/>
            <person name="Andres S."/>
            <person name="Henne A."/>
            <person name="Fricke W.F."/>
            <person name="Martinez-Arias R."/>
            <person name="Bartels D."/>
            <person name="Goesmann A."/>
            <person name="Krause L."/>
            <person name="Puehler A."/>
            <person name="Klenk H.P."/>
            <person name="Richter M."/>
            <person name="Schuler M."/>
            <person name="Gloeckner F.O."/>
            <person name="Meyerdierks A."/>
            <person name="Gottschalk G."/>
            <person name="Amann R."/>
        </authorList>
    </citation>
    <scope>NUCLEOTIDE SEQUENCE [LARGE SCALE GENOMIC DNA]</scope>
    <source>
        <strain>ATCC 43914 / DSM 3382 / VKM B-1955 / HRM2</strain>
    </source>
</reference>
<accession>C0Q9W1</accession>
<evidence type="ECO:0000255" key="1">
    <source>
        <dbReference type="HAMAP-Rule" id="MF_01333"/>
    </source>
</evidence>
<evidence type="ECO:0000305" key="2"/>
<sequence length="179" mass="20074">MTTLKEMYEKEIVPGLKETFGYKNPMEVPKLDKIVLNIGLGEAINNVKLLDSAVEDLALIAGQRPVITKAKKSIAAFKLREGMPIGCMVTLRREKMYDFLLKLINITLPRVRDFRGISGKAFDGHGNYSLGIKEHIIFPEIDFDQTDSIKGLNVSIVTTAKTDKEGKELLKQFGMPFKN</sequence>
<dbReference type="EMBL" id="CP001087">
    <property type="protein sequence ID" value="ACN16679.1"/>
    <property type="molecule type" value="Genomic_DNA"/>
</dbReference>
<dbReference type="RefSeq" id="WP_015905429.1">
    <property type="nucleotide sequence ID" value="NC_012108.1"/>
</dbReference>
<dbReference type="SMR" id="C0Q9W1"/>
<dbReference type="STRING" id="177437.HRM2_36140"/>
<dbReference type="KEGG" id="dat:HRM2_36140"/>
<dbReference type="eggNOG" id="COG0094">
    <property type="taxonomic scope" value="Bacteria"/>
</dbReference>
<dbReference type="HOGENOM" id="CLU_061015_2_1_7"/>
<dbReference type="OrthoDB" id="9806626at2"/>
<dbReference type="Proteomes" id="UP000000442">
    <property type="component" value="Chromosome"/>
</dbReference>
<dbReference type="GO" id="GO:1990904">
    <property type="term" value="C:ribonucleoprotein complex"/>
    <property type="evidence" value="ECO:0007669"/>
    <property type="project" value="UniProtKB-KW"/>
</dbReference>
<dbReference type="GO" id="GO:0005840">
    <property type="term" value="C:ribosome"/>
    <property type="evidence" value="ECO:0007669"/>
    <property type="project" value="UniProtKB-KW"/>
</dbReference>
<dbReference type="GO" id="GO:0019843">
    <property type="term" value="F:rRNA binding"/>
    <property type="evidence" value="ECO:0007669"/>
    <property type="project" value="UniProtKB-UniRule"/>
</dbReference>
<dbReference type="GO" id="GO:0003735">
    <property type="term" value="F:structural constituent of ribosome"/>
    <property type="evidence" value="ECO:0007669"/>
    <property type="project" value="InterPro"/>
</dbReference>
<dbReference type="GO" id="GO:0000049">
    <property type="term" value="F:tRNA binding"/>
    <property type="evidence" value="ECO:0007669"/>
    <property type="project" value="UniProtKB-UniRule"/>
</dbReference>
<dbReference type="GO" id="GO:0006412">
    <property type="term" value="P:translation"/>
    <property type="evidence" value="ECO:0007669"/>
    <property type="project" value="UniProtKB-UniRule"/>
</dbReference>
<dbReference type="FunFam" id="3.30.1440.10:FF:000001">
    <property type="entry name" value="50S ribosomal protein L5"/>
    <property type="match status" value="1"/>
</dbReference>
<dbReference type="Gene3D" id="3.30.1440.10">
    <property type="match status" value="1"/>
</dbReference>
<dbReference type="HAMAP" id="MF_01333_B">
    <property type="entry name" value="Ribosomal_uL5_B"/>
    <property type="match status" value="1"/>
</dbReference>
<dbReference type="InterPro" id="IPR002132">
    <property type="entry name" value="Ribosomal_uL5"/>
</dbReference>
<dbReference type="InterPro" id="IPR020930">
    <property type="entry name" value="Ribosomal_uL5_bac-type"/>
</dbReference>
<dbReference type="InterPro" id="IPR031309">
    <property type="entry name" value="Ribosomal_uL5_C"/>
</dbReference>
<dbReference type="InterPro" id="IPR020929">
    <property type="entry name" value="Ribosomal_uL5_CS"/>
</dbReference>
<dbReference type="InterPro" id="IPR022803">
    <property type="entry name" value="Ribosomal_uL5_dom_sf"/>
</dbReference>
<dbReference type="InterPro" id="IPR031310">
    <property type="entry name" value="Ribosomal_uL5_N"/>
</dbReference>
<dbReference type="NCBIfam" id="NF000585">
    <property type="entry name" value="PRK00010.1"/>
    <property type="match status" value="1"/>
</dbReference>
<dbReference type="PANTHER" id="PTHR11994">
    <property type="entry name" value="60S RIBOSOMAL PROTEIN L11-RELATED"/>
    <property type="match status" value="1"/>
</dbReference>
<dbReference type="Pfam" id="PF00281">
    <property type="entry name" value="Ribosomal_L5"/>
    <property type="match status" value="1"/>
</dbReference>
<dbReference type="Pfam" id="PF00673">
    <property type="entry name" value="Ribosomal_L5_C"/>
    <property type="match status" value="1"/>
</dbReference>
<dbReference type="PIRSF" id="PIRSF002161">
    <property type="entry name" value="Ribosomal_L5"/>
    <property type="match status" value="1"/>
</dbReference>
<dbReference type="SUPFAM" id="SSF55282">
    <property type="entry name" value="RL5-like"/>
    <property type="match status" value="1"/>
</dbReference>
<dbReference type="PROSITE" id="PS00358">
    <property type="entry name" value="RIBOSOMAL_L5"/>
    <property type="match status" value="1"/>
</dbReference>
<organism>
    <name type="scientific">Desulforapulum autotrophicum (strain ATCC 43914 / DSM 3382 / VKM B-1955 / HRM2)</name>
    <name type="common">Desulfobacterium autotrophicum</name>
    <dbReference type="NCBI Taxonomy" id="177437"/>
    <lineage>
        <taxon>Bacteria</taxon>
        <taxon>Pseudomonadati</taxon>
        <taxon>Thermodesulfobacteriota</taxon>
        <taxon>Desulfobacteria</taxon>
        <taxon>Desulfobacterales</taxon>
        <taxon>Desulfobacteraceae</taxon>
        <taxon>Desulforapulum</taxon>
    </lineage>
</organism>